<protein>
    <recommendedName>
        <fullName evidence="1">7-methyl-GTP pyrophosphatase</fullName>
        <shortName evidence="1">m(7)GTP pyrophosphatase</shortName>
        <ecNumber evidence="1">3.6.1.-</ecNumber>
    </recommendedName>
</protein>
<sequence length="199" mass="21093">MPAIPPKLILASSSRYRRELLSRLRLPFTAISPDVDETPQPGEAPADLALRLSVAKAMAVAATHPGSVVIGSDQVATVDGDPIGKPGGFERAREQLRRLSGRAVEFHSAMAVTDGVHTETADIVTLCRFRTLTDAAIDAYLRAEEPYDTAGSAKAESLGIALMDSIRSDDPTAIIGLPLIALTRMLGRFGLDPLTGHPA</sequence>
<organism>
    <name type="scientific">Bordetella parapertussis (strain 12822 / ATCC BAA-587 / NCTC 13253)</name>
    <dbReference type="NCBI Taxonomy" id="257311"/>
    <lineage>
        <taxon>Bacteria</taxon>
        <taxon>Pseudomonadati</taxon>
        <taxon>Pseudomonadota</taxon>
        <taxon>Betaproteobacteria</taxon>
        <taxon>Burkholderiales</taxon>
        <taxon>Alcaligenaceae</taxon>
        <taxon>Bordetella</taxon>
    </lineage>
</organism>
<comment type="function">
    <text evidence="1">Nucleoside triphosphate pyrophosphatase that hydrolyzes 7-methyl-GTP (m(7)GTP). May have a dual role in cell division arrest and in preventing the incorporation of modified nucleotides into cellular nucleic acids.</text>
</comment>
<comment type="catalytic activity">
    <reaction evidence="1">
        <text>N(7)-methyl-GTP + H2O = N(7)-methyl-GMP + diphosphate + H(+)</text>
        <dbReference type="Rhea" id="RHEA:58744"/>
        <dbReference type="ChEBI" id="CHEBI:15377"/>
        <dbReference type="ChEBI" id="CHEBI:15378"/>
        <dbReference type="ChEBI" id="CHEBI:33019"/>
        <dbReference type="ChEBI" id="CHEBI:58285"/>
        <dbReference type="ChEBI" id="CHEBI:87133"/>
    </reaction>
</comment>
<comment type="cofactor">
    <cofactor evidence="1">
        <name>a divalent metal cation</name>
        <dbReference type="ChEBI" id="CHEBI:60240"/>
    </cofactor>
</comment>
<comment type="subcellular location">
    <subcellularLocation>
        <location evidence="1">Cytoplasm</location>
    </subcellularLocation>
</comment>
<comment type="similarity">
    <text evidence="1">Belongs to the Maf family. YceF subfamily.</text>
</comment>
<gene>
    <name type="ordered locus">BPP3311</name>
</gene>
<accession>Q7W5I0</accession>
<name>NTPPB_BORPA</name>
<proteinExistence type="inferred from homology"/>
<reference key="1">
    <citation type="journal article" date="2003" name="Nat. Genet.">
        <title>Comparative analysis of the genome sequences of Bordetella pertussis, Bordetella parapertussis and Bordetella bronchiseptica.</title>
        <authorList>
            <person name="Parkhill J."/>
            <person name="Sebaihia M."/>
            <person name="Preston A."/>
            <person name="Murphy L.D."/>
            <person name="Thomson N.R."/>
            <person name="Harris D.E."/>
            <person name="Holden M.T.G."/>
            <person name="Churcher C.M."/>
            <person name="Bentley S.D."/>
            <person name="Mungall K.L."/>
            <person name="Cerdeno-Tarraga A.-M."/>
            <person name="Temple L."/>
            <person name="James K.D."/>
            <person name="Harris B."/>
            <person name="Quail M.A."/>
            <person name="Achtman M."/>
            <person name="Atkin R."/>
            <person name="Baker S."/>
            <person name="Basham D."/>
            <person name="Bason N."/>
            <person name="Cherevach I."/>
            <person name="Chillingworth T."/>
            <person name="Collins M."/>
            <person name="Cronin A."/>
            <person name="Davis P."/>
            <person name="Doggett J."/>
            <person name="Feltwell T."/>
            <person name="Goble A."/>
            <person name="Hamlin N."/>
            <person name="Hauser H."/>
            <person name="Holroyd S."/>
            <person name="Jagels K."/>
            <person name="Leather S."/>
            <person name="Moule S."/>
            <person name="Norberczak H."/>
            <person name="O'Neil S."/>
            <person name="Ormond D."/>
            <person name="Price C."/>
            <person name="Rabbinowitsch E."/>
            <person name="Rutter S."/>
            <person name="Sanders M."/>
            <person name="Saunders D."/>
            <person name="Seeger K."/>
            <person name="Sharp S."/>
            <person name="Simmonds M."/>
            <person name="Skelton J."/>
            <person name="Squares R."/>
            <person name="Squares S."/>
            <person name="Stevens K."/>
            <person name="Unwin L."/>
            <person name="Whitehead S."/>
            <person name="Barrell B.G."/>
            <person name="Maskell D.J."/>
        </authorList>
    </citation>
    <scope>NUCLEOTIDE SEQUENCE [LARGE SCALE GENOMIC DNA]</scope>
    <source>
        <strain>12822 / ATCC BAA-587 / NCTC 13253</strain>
    </source>
</reference>
<evidence type="ECO:0000255" key="1">
    <source>
        <dbReference type="HAMAP-Rule" id="MF_00528"/>
    </source>
</evidence>
<feature type="chain" id="PRO_0000122994" description="7-methyl-GTP pyrophosphatase">
    <location>
        <begin position="1"/>
        <end position="199"/>
    </location>
</feature>
<feature type="active site" description="Proton acceptor" evidence="1">
    <location>
        <position position="73"/>
    </location>
</feature>
<feature type="site" description="Important for substrate specificity" evidence="1">
    <location>
        <position position="16"/>
    </location>
</feature>
<feature type="site" description="Important for substrate specificity" evidence="1">
    <location>
        <position position="74"/>
    </location>
</feature>
<feature type="site" description="Important for substrate specificity" evidence="1">
    <location>
        <position position="156"/>
    </location>
</feature>
<keyword id="KW-0963">Cytoplasm</keyword>
<keyword id="KW-0378">Hydrolase</keyword>
<keyword id="KW-0546">Nucleotide metabolism</keyword>
<dbReference type="EC" id="3.6.1.-" evidence="1"/>
<dbReference type="EMBL" id="BX640433">
    <property type="protein sequence ID" value="CAE38596.1"/>
    <property type="molecule type" value="Genomic_DNA"/>
</dbReference>
<dbReference type="RefSeq" id="WP_003813831.1">
    <property type="nucleotide sequence ID" value="NC_002928.3"/>
</dbReference>
<dbReference type="SMR" id="Q7W5I0"/>
<dbReference type="KEGG" id="bpa:BPP3311"/>
<dbReference type="HOGENOM" id="CLU_040416_1_0_4"/>
<dbReference type="Proteomes" id="UP000001421">
    <property type="component" value="Chromosome"/>
</dbReference>
<dbReference type="GO" id="GO:0005737">
    <property type="term" value="C:cytoplasm"/>
    <property type="evidence" value="ECO:0007669"/>
    <property type="project" value="UniProtKB-SubCell"/>
</dbReference>
<dbReference type="GO" id="GO:0047429">
    <property type="term" value="F:nucleoside triphosphate diphosphatase activity"/>
    <property type="evidence" value="ECO:0007669"/>
    <property type="project" value="InterPro"/>
</dbReference>
<dbReference type="GO" id="GO:0009117">
    <property type="term" value="P:nucleotide metabolic process"/>
    <property type="evidence" value="ECO:0007669"/>
    <property type="project" value="UniProtKB-KW"/>
</dbReference>
<dbReference type="CDD" id="cd00555">
    <property type="entry name" value="Maf"/>
    <property type="match status" value="1"/>
</dbReference>
<dbReference type="Gene3D" id="3.90.950.10">
    <property type="match status" value="1"/>
</dbReference>
<dbReference type="HAMAP" id="MF_00528">
    <property type="entry name" value="Maf"/>
    <property type="match status" value="1"/>
</dbReference>
<dbReference type="InterPro" id="IPR029001">
    <property type="entry name" value="ITPase-like_fam"/>
</dbReference>
<dbReference type="InterPro" id="IPR003697">
    <property type="entry name" value="Maf-like"/>
</dbReference>
<dbReference type="NCBIfam" id="TIGR00172">
    <property type="entry name" value="maf"/>
    <property type="match status" value="1"/>
</dbReference>
<dbReference type="PANTHER" id="PTHR43213:SF10">
    <property type="entry name" value="7-METHYL-GTP PYROPHOSPHATASE"/>
    <property type="match status" value="1"/>
</dbReference>
<dbReference type="PANTHER" id="PTHR43213">
    <property type="entry name" value="BIFUNCTIONAL DTTP/UTP PYROPHOSPHATASE/METHYLTRANSFERASE PROTEIN-RELATED"/>
    <property type="match status" value="1"/>
</dbReference>
<dbReference type="Pfam" id="PF02545">
    <property type="entry name" value="Maf"/>
    <property type="match status" value="1"/>
</dbReference>
<dbReference type="PIRSF" id="PIRSF006305">
    <property type="entry name" value="Maf"/>
    <property type="match status" value="1"/>
</dbReference>
<dbReference type="SUPFAM" id="SSF52972">
    <property type="entry name" value="ITPase-like"/>
    <property type="match status" value="1"/>
</dbReference>